<sequence length="429" mass="49811">MLSMQVVSLISLLVSVCLAQPLPLSKRYFEYENYKVRGVNLGGWLVLEPFITPSLFETFRTNEYNDDGIPYDEYHYCQYLGEDLARDRLKQHWSTWITEADFEDISNTGLNTVRIPIGYWAFELLDDDPYVSGLQEAYLDQAIEWARSYGLKVWVDLHGAPGSQNGFDNSGLRDQVEFQQDGNWDVFKNVLAYVIEKYSRDEFTDTVVGVEVLNEPLGPVIDMDKLKELYNWAYDYLRNDLQRDQILVIHDAFQKANYFDDQLTVEQGAFGVLVDHHHYQVFSPEEVGRTIDEHISVVCEQGKETLTEAHWNVVGEWSAALTDCTKWLNGVGIGARYDGSFVKNQDTSYWIGSCEGSQDISTWTSDKKDNYRKYIEAQLDAYEIRNGWIYWCYKTEDTLEWDYRKLVQSGLFPQPLTNRQFPNQCSSTY</sequence>
<dbReference type="EC" id="3.2.1.58"/>
<dbReference type="EMBL" id="Z46869">
    <property type="protein sequence ID" value="CAA86949.1"/>
    <property type="molecule type" value="Genomic_DNA"/>
</dbReference>
<dbReference type="EMBL" id="CR382123">
    <property type="protein sequence ID" value="CAH01288.1"/>
    <property type="molecule type" value="Genomic_DNA"/>
</dbReference>
<dbReference type="RefSeq" id="XP_452437.1">
    <property type="nucleotide sequence ID" value="XM_452437.1"/>
</dbReference>
<dbReference type="SMR" id="Q12628"/>
<dbReference type="FunCoup" id="Q12628">
    <property type="interactions" value="174"/>
</dbReference>
<dbReference type="STRING" id="284590.Q12628"/>
<dbReference type="CAZy" id="GH5">
    <property type="family name" value="Glycoside Hydrolase Family 5"/>
</dbReference>
<dbReference type="PaxDb" id="284590-Q12628"/>
<dbReference type="KEGG" id="kla:KLLA0_C05324g"/>
<dbReference type="eggNOG" id="ENOG502QPYU">
    <property type="taxonomic scope" value="Eukaryota"/>
</dbReference>
<dbReference type="HOGENOM" id="CLU_004624_0_1_1"/>
<dbReference type="InParanoid" id="Q12628"/>
<dbReference type="OMA" id="MDYHEYQ"/>
<dbReference type="Proteomes" id="UP000000598">
    <property type="component" value="Chromosome C"/>
</dbReference>
<dbReference type="GO" id="GO:0009986">
    <property type="term" value="C:cell surface"/>
    <property type="evidence" value="ECO:0007669"/>
    <property type="project" value="TreeGrafter"/>
</dbReference>
<dbReference type="GO" id="GO:0005576">
    <property type="term" value="C:extracellular region"/>
    <property type="evidence" value="ECO:0007669"/>
    <property type="project" value="UniProtKB-SubCell"/>
</dbReference>
<dbReference type="GO" id="GO:0004338">
    <property type="term" value="F:glucan exo-1,3-beta-glucosidase activity"/>
    <property type="evidence" value="ECO:0007669"/>
    <property type="project" value="UniProtKB-EC"/>
</dbReference>
<dbReference type="GO" id="GO:0071555">
    <property type="term" value="P:cell wall organization"/>
    <property type="evidence" value="ECO:0007669"/>
    <property type="project" value="UniProtKB-KW"/>
</dbReference>
<dbReference type="GO" id="GO:0009251">
    <property type="term" value="P:glucan catabolic process"/>
    <property type="evidence" value="ECO:0007669"/>
    <property type="project" value="TreeGrafter"/>
</dbReference>
<dbReference type="FunFam" id="3.20.20.80:FF:000033">
    <property type="entry name" value="Glucan 1,3-beta-glucosidase A"/>
    <property type="match status" value="1"/>
</dbReference>
<dbReference type="Gene3D" id="3.20.20.80">
    <property type="entry name" value="Glycosidases"/>
    <property type="match status" value="1"/>
</dbReference>
<dbReference type="InterPro" id="IPR001547">
    <property type="entry name" value="Glyco_hydro_5"/>
</dbReference>
<dbReference type="InterPro" id="IPR018087">
    <property type="entry name" value="Glyco_hydro_5_CS"/>
</dbReference>
<dbReference type="InterPro" id="IPR017853">
    <property type="entry name" value="Glycoside_hydrolase_SF"/>
</dbReference>
<dbReference type="InterPro" id="IPR050386">
    <property type="entry name" value="Glycosyl_hydrolase_5"/>
</dbReference>
<dbReference type="PANTHER" id="PTHR31297:SF1">
    <property type="entry name" value="GLUCAN 1,3-BETA-GLUCOSIDASE I_II-RELATED"/>
    <property type="match status" value="1"/>
</dbReference>
<dbReference type="PANTHER" id="PTHR31297">
    <property type="entry name" value="GLUCAN ENDO-1,6-BETA-GLUCOSIDASE B"/>
    <property type="match status" value="1"/>
</dbReference>
<dbReference type="Pfam" id="PF00150">
    <property type="entry name" value="Cellulase"/>
    <property type="match status" value="1"/>
</dbReference>
<dbReference type="SUPFAM" id="SSF51445">
    <property type="entry name" value="(Trans)glycosidases"/>
    <property type="match status" value="1"/>
</dbReference>
<dbReference type="PROSITE" id="PS00659">
    <property type="entry name" value="GLYCOSYL_HYDROL_F5"/>
    <property type="match status" value="1"/>
</dbReference>
<organism>
    <name type="scientific">Kluyveromyces lactis (strain ATCC 8585 / CBS 2359 / DSM 70799 / NBRC 1267 / NRRL Y-1140 / WM37)</name>
    <name type="common">Yeast</name>
    <name type="synonym">Candida sphaerica</name>
    <dbReference type="NCBI Taxonomy" id="284590"/>
    <lineage>
        <taxon>Eukaryota</taxon>
        <taxon>Fungi</taxon>
        <taxon>Dikarya</taxon>
        <taxon>Ascomycota</taxon>
        <taxon>Saccharomycotina</taxon>
        <taxon>Saccharomycetes</taxon>
        <taxon>Saccharomycetales</taxon>
        <taxon>Saccharomycetaceae</taxon>
        <taxon>Kluyveromyces</taxon>
    </lineage>
</organism>
<protein>
    <recommendedName>
        <fullName>Glucan 1,3-beta-glucosidase</fullName>
        <ecNumber>3.2.1.58</ecNumber>
    </recommendedName>
    <alternativeName>
        <fullName>Exo-1,3-beta-glucanase</fullName>
    </alternativeName>
</protein>
<comment type="function">
    <text evidence="1">Beta-glucanases participate in the metabolism of beta-glucan, the main structural component of the cell wall. It could also function biosynthetically as a transglycosylase (By similarity).</text>
</comment>
<comment type="catalytic activity">
    <reaction>
        <text>Successive hydrolysis of beta-D-glucose units from the non-reducing ends of (1-&gt;3)-beta-D-glucans, releasing alpha-glucose.</text>
        <dbReference type="EC" id="3.2.1.58"/>
    </reaction>
</comment>
<comment type="subcellular location">
    <subcellularLocation>
        <location evidence="3">Secreted</location>
    </subcellularLocation>
</comment>
<comment type="similarity">
    <text evidence="3">Belongs to the glycosyl hydrolase 5 (cellulase A) family.</text>
</comment>
<proteinExistence type="inferred from homology"/>
<gene>
    <name type="ordered locus">KLLA0C05324g</name>
</gene>
<name>EXG_KLULA</name>
<evidence type="ECO:0000250" key="1"/>
<evidence type="ECO:0000255" key="2"/>
<evidence type="ECO:0000305" key="3"/>
<feature type="signal peptide" evidence="2">
    <location>
        <begin position="1"/>
        <end position="19"/>
    </location>
</feature>
<feature type="propeptide" id="PRO_0000007884" evidence="1">
    <location>
        <begin position="20"/>
        <end position="27"/>
    </location>
</feature>
<feature type="chain" id="PRO_0000007885" description="Glucan 1,3-beta-glucosidase" evidence="1">
    <location>
        <begin position="28"/>
        <end position="429"/>
    </location>
</feature>
<feature type="active site" description="Proton donor" evidence="1">
    <location>
        <position position="215"/>
    </location>
</feature>
<feature type="active site" description="Nucleophile" evidence="1">
    <location>
        <position position="316"/>
    </location>
</feature>
<feature type="disulfide bond" evidence="1">
    <location>
        <begin position="299"/>
        <end position="425"/>
    </location>
</feature>
<feature type="disulfide bond" evidence="1">
    <location>
        <begin position="324"/>
        <end position="354"/>
    </location>
</feature>
<keyword id="KW-0961">Cell wall biogenesis/degradation</keyword>
<keyword id="KW-0165">Cleavage on pair of basic residues</keyword>
<keyword id="KW-1015">Disulfide bond</keyword>
<keyword id="KW-0326">Glycosidase</keyword>
<keyword id="KW-0378">Hydrolase</keyword>
<keyword id="KW-1185">Reference proteome</keyword>
<keyword id="KW-0964">Secreted</keyword>
<keyword id="KW-0732">Signal</keyword>
<keyword id="KW-0865">Zymogen</keyword>
<reference key="1">
    <citation type="journal article" date="1999" name="Yeast">
        <title>Cloning and characterization of 1,3-beta-glucanase-encoding genes from non-conventional yeasts.</title>
        <authorList>
            <person name="Esteban P.F."/>
            <person name="Vazquez de Aldana C.R."/>
            <person name="del Rey F."/>
        </authorList>
    </citation>
    <scope>NUCLEOTIDE SEQUENCE [GENOMIC DNA]</scope>
    <source>
        <strain>ATCC 76492 / CBS 2359/152 / CLIB 210</strain>
    </source>
</reference>
<reference key="2">
    <citation type="journal article" date="2004" name="Nature">
        <title>Genome evolution in yeasts.</title>
        <authorList>
            <person name="Dujon B."/>
            <person name="Sherman D."/>
            <person name="Fischer G."/>
            <person name="Durrens P."/>
            <person name="Casaregola S."/>
            <person name="Lafontaine I."/>
            <person name="de Montigny J."/>
            <person name="Marck C."/>
            <person name="Neuveglise C."/>
            <person name="Talla E."/>
            <person name="Goffard N."/>
            <person name="Frangeul L."/>
            <person name="Aigle M."/>
            <person name="Anthouard V."/>
            <person name="Babour A."/>
            <person name="Barbe V."/>
            <person name="Barnay S."/>
            <person name="Blanchin S."/>
            <person name="Beckerich J.-M."/>
            <person name="Beyne E."/>
            <person name="Bleykasten C."/>
            <person name="Boisrame A."/>
            <person name="Boyer J."/>
            <person name="Cattolico L."/>
            <person name="Confanioleri F."/>
            <person name="de Daruvar A."/>
            <person name="Despons L."/>
            <person name="Fabre E."/>
            <person name="Fairhead C."/>
            <person name="Ferry-Dumazet H."/>
            <person name="Groppi A."/>
            <person name="Hantraye F."/>
            <person name="Hennequin C."/>
            <person name="Jauniaux N."/>
            <person name="Joyet P."/>
            <person name="Kachouri R."/>
            <person name="Kerrest A."/>
            <person name="Koszul R."/>
            <person name="Lemaire M."/>
            <person name="Lesur I."/>
            <person name="Ma L."/>
            <person name="Muller H."/>
            <person name="Nicaud J.-M."/>
            <person name="Nikolski M."/>
            <person name="Oztas S."/>
            <person name="Ozier-Kalogeropoulos O."/>
            <person name="Pellenz S."/>
            <person name="Potier S."/>
            <person name="Richard G.-F."/>
            <person name="Straub M.-L."/>
            <person name="Suleau A."/>
            <person name="Swennen D."/>
            <person name="Tekaia F."/>
            <person name="Wesolowski-Louvel M."/>
            <person name="Westhof E."/>
            <person name="Wirth B."/>
            <person name="Zeniou-Meyer M."/>
            <person name="Zivanovic Y."/>
            <person name="Bolotin-Fukuhara M."/>
            <person name="Thierry A."/>
            <person name="Bouchier C."/>
            <person name="Caudron B."/>
            <person name="Scarpelli C."/>
            <person name="Gaillardin C."/>
            <person name="Weissenbach J."/>
            <person name="Wincker P."/>
            <person name="Souciet J.-L."/>
        </authorList>
    </citation>
    <scope>NUCLEOTIDE SEQUENCE [LARGE SCALE GENOMIC DNA]</scope>
    <source>
        <strain>ATCC 8585 / CBS 2359 / DSM 70799 / NBRC 1267 / NRRL Y-1140 / WM37</strain>
    </source>
</reference>
<accession>Q12628</accession>